<organism>
    <name type="scientific">Mus musculus</name>
    <name type="common">Mouse</name>
    <dbReference type="NCBI Taxonomy" id="10090"/>
    <lineage>
        <taxon>Eukaryota</taxon>
        <taxon>Metazoa</taxon>
        <taxon>Chordata</taxon>
        <taxon>Craniata</taxon>
        <taxon>Vertebrata</taxon>
        <taxon>Euteleostomi</taxon>
        <taxon>Mammalia</taxon>
        <taxon>Eutheria</taxon>
        <taxon>Euarchontoglires</taxon>
        <taxon>Glires</taxon>
        <taxon>Rodentia</taxon>
        <taxon>Myomorpha</taxon>
        <taxon>Muroidea</taxon>
        <taxon>Muridae</taxon>
        <taxon>Murinae</taxon>
        <taxon>Mus</taxon>
        <taxon>Mus</taxon>
    </lineage>
</organism>
<reference key="1">
    <citation type="journal article" date="2009" name="PLoS Biol.">
        <title>Lineage-specific biology revealed by a finished genome assembly of the mouse.</title>
        <authorList>
            <person name="Church D.M."/>
            <person name="Goodstadt L."/>
            <person name="Hillier L.W."/>
            <person name="Zody M.C."/>
            <person name="Goldstein S."/>
            <person name="She X."/>
            <person name="Bult C.J."/>
            <person name="Agarwala R."/>
            <person name="Cherry J.L."/>
            <person name="DiCuccio M."/>
            <person name="Hlavina W."/>
            <person name="Kapustin Y."/>
            <person name="Meric P."/>
            <person name="Maglott D."/>
            <person name="Birtle Z."/>
            <person name="Marques A.C."/>
            <person name="Graves T."/>
            <person name="Zhou S."/>
            <person name="Teague B."/>
            <person name="Potamousis K."/>
            <person name="Churas C."/>
            <person name="Place M."/>
            <person name="Herschleb J."/>
            <person name="Runnheim R."/>
            <person name="Forrest D."/>
            <person name="Amos-Landgraf J."/>
            <person name="Schwartz D.C."/>
            <person name="Cheng Z."/>
            <person name="Lindblad-Toh K."/>
            <person name="Eichler E.E."/>
            <person name="Ponting C.P."/>
        </authorList>
    </citation>
    <scope>NUCLEOTIDE SEQUENCE [LARGE SCALE GENOMIC DNA]</scope>
    <source>
        <strain>C57BL/6J</strain>
    </source>
</reference>
<reference key="2">
    <citation type="submission" date="2005-07" db="EMBL/GenBank/DDBJ databases">
        <authorList>
            <person name="Mural R.J."/>
            <person name="Adams M.D."/>
            <person name="Myers E.W."/>
            <person name="Smith H.O."/>
            <person name="Venter J.C."/>
        </authorList>
    </citation>
    <scope>NUCLEOTIDE SEQUENCE [LARGE SCALE GENOMIC DNA]</scope>
</reference>
<reference key="3">
    <citation type="journal article" date="2004" name="Genome Res.">
        <title>The status, quality, and expansion of the NIH full-length cDNA project: the Mammalian Gene Collection (MGC).</title>
        <authorList>
            <consortium name="The MGC Project Team"/>
        </authorList>
    </citation>
    <scope>NUCLEOTIDE SEQUENCE [LARGE SCALE MRNA]</scope>
    <source>
        <strain>C57BL/6J</strain>
        <tissue>Brain</tissue>
    </source>
</reference>
<reference key="4">
    <citation type="journal article" date="2010" name="Cell">
        <title>A tissue-specific atlas of mouse protein phosphorylation and expression.</title>
        <authorList>
            <person name="Huttlin E.L."/>
            <person name="Jedrychowski M.P."/>
            <person name="Elias J.E."/>
            <person name="Goswami T."/>
            <person name="Rad R."/>
            <person name="Beausoleil S.A."/>
            <person name="Villen J."/>
            <person name="Haas W."/>
            <person name="Sowa M.E."/>
            <person name="Gygi S.P."/>
        </authorList>
    </citation>
    <scope>IDENTIFICATION BY MASS SPECTROMETRY [LARGE SCALE ANALYSIS]</scope>
    <source>
        <tissue>Brain</tissue>
    </source>
</reference>
<name>RPGFL_MOUSE</name>
<feature type="chain" id="PRO_0000349203" description="Rap guanine nucleotide exchange factor-like 1">
    <location>
        <begin position="1"/>
        <end position="662"/>
    </location>
</feature>
<feature type="domain" description="Ras-GEF" evidence="1">
    <location>
        <begin position="424"/>
        <end position="660"/>
    </location>
</feature>
<feature type="region of interest" description="Disordered" evidence="2">
    <location>
        <begin position="1"/>
        <end position="149"/>
    </location>
</feature>
<feature type="compositionally biased region" description="Gly residues" evidence="2">
    <location>
        <begin position="20"/>
        <end position="48"/>
    </location>
</feature>
<feature type="compositionally biased region" description="Low complexity" evidence="2">
    <location>
        <begin position="49"/>
        <end position="65"/>
    </location>
</feature>
<feature type="compositionally biased region" description="Low complexity" evidence="2">
    <location>
        <begin position="116"/>
        <end position="133"/>
    </location>
</feature>
<gene>
    <name type="primary">Rapgefl1</name>
</gene>
<protein>
    <recommendedName>
        <fullName>Rap guanine nucleotide exchange factor-like 1</fullName>
    </recommendedName>
</protein>
<sequence length="662" mass="73695">MKPLEKFLKKQTSQLAGRAVTGGPGGGPGCCGGPGGGGGPGGGGGPAGGLRPLQRRQSVSRLLLPAFLREPPTEPGLEPPVEEEGGEPLGVSEEPGSGGPCWLQLEEVPGPGPIGSGVPLRSPSSYSSDELSPGEPLASPPWAPLGAPERPEHLLNRVLERLAGGTTRDSSASDILLDDIVLTHSLFLPTEKFLQELHQYFVQSRNVEGPEGLGRKQACLALLLHFLDTYQGLLQEEEGAGHIIKELYLLIMKDESLYQDLREDTLRLHQLVETVELKIPEESQPPSKQVKPLFRHFRRIDSCLQTRVAFRGSDEIFCRVYMPDHSYVTIRSRLSASVQDILGSVTEKLQYSEEPAEREDALILVAVASSGEKVLLQPTEDCVFTTLGINSHLFACTRDSYEALVPLPEEVQVSPGDTEIHRVEPEDVANHLTAFHWELFRCVHELEFVDYVFHGERGRRETANLELLLQRCSEVTHWVATEVLLCEAPGKRVQLLKKFIKIAAICKQNQDLLSFYAVVMGLDNAAVSRLRLTWEKLPGKFKNLFRKFEGLTDPCRNHKSYREVISKMKPPLIPFVPLILKDLTFLHEGSKTLVDGLVNIEKLHSVAEKVRTIRKYRSRPLCLDMEASPHHLQTKAYVRQFQVIDNQNHLFELSYKLEANSQ</sequence>
<dbReference type="EMBL" id="AL590963">
    <property type="status" value="NOT_ANNOTATED_CDS"/>
    <property type="molecule type" value="Genomic_DNA"/>
</dbReference>
<dbReference type="EMBL" id="CH466556">
    <property type="protein sequence ID" value="EDL16171.1"/>
    <property type="molecule type" value="Genomic_DNA"/>
</dbReference>
<dbReference type="EMBL" id="BC080279">
    <property type="protein sequence ID" value="AAH80279.1"/>
    <property type="molecule type" value="mRNA"/>
</dbReference>
<dbReference type="EMBL" id="BC130266">
    <property type="protein sequence ID" value="AAI30267.1"/>
    <property type="status" value="ALT_SEQ"/>
    <property type="molecule type" value="mRNA"/>
</dbReference>
<dbReference type="CCDS" id="CCDS36303.1"/>
<dbReference type="RefSeq" id="NP_001074394.1">
    <property type="nucleotide sequence ID" value="NM_001080925.1"/>
</dbReference>
<dbReference type="SMR" id="Q68EF8"/>
<dbReference type="BioGRID" id="234506">
    <property type="interactions" value="22"/>
</dbReference>
<dbReference type="FunCoup" id="Q68EF8">
    <property type="interactions" value="942"/>
</dbReference>
<dbReference type="STRING" id="10090.ENSMUSP00000103103"/>
<dbReference type="iPTMnet" id="Q68EF8"/>
<dbReference type="PhosphoSitePlus" id="Q68EF8"/>
<dbReference type="PaxDb" id="10090-ENSMUSP00000103103"/>
<dbReference type="ProteomicsDB" id="260928"/>
<dbReference type="Antibodypedia" id="16447">
    <property type="antibodies" value="76 antibodies from 20 providers"/>
</dbReference>
<dbReference type="Ensembl" id="ENSMUST00000107479.3">
    <property type="protein sequence ID" value="ENSMUSP00000103103.3"/>
    <property type="gene ID" value="ENSMUSG00000038020.6"/>
</dbReference>
<dbReference type="GeneID" id="268480"/>
<dbReference type="KEGG" id="mmu:268480"/>
<dbReference type="UCSC" id="uc007lhr.1">
    <property type="organism name" value="mouse"/>
</dbReference>
<dbReference type="AGR" id="MGI:3611446"/>
<dbReference type="CTD" id="51195"/>
<dbReference type="MGI" id="MGI:3611446">
    <property type="gene designation" value="Rapgefl1"/>
</dbReference>
<dbReference type="VEuPathDB" id="HostDB:ENSMUSG00000038020"/>
<dbReference type="eggNOG" id="KOG2378">
    <property type="taxonomic scope" value="Eukaryota"/>
</dbReference>
<dbReference type="GeneTree" id="ENSGT00940000160144"/>
<dbReference type="HOGENOM" id="CLU_028002_2_0_1"/>
<dbReference type="InParanoid" id="Q68EF8"/>
<dbReference type="OMA" id="LQPNEDC"/>
<dbReference type="OrthoDB" id="21144at2759"/>
<dbReference type="PhylomeDB" id="Q68EF8"/>
<dbReference type="TreeFam" id="TF313184"/>
<dbReference type="BioGRID-ORCS" id="268480">
    <property type="hits" value="5 hits in 79 CRISPR screens"/>
</dbReference>
<dbReference type="ChiTaRS" id="Rapgefl1">
    <property type="organism name" value="mouse"/>
</dbReference>
<dbReference type="PRO" id="PR:Q68EF8"/>
<dbReference type="Proteomes" id="UP000000589">
    <property type="component" value="Chromosome 11"/>
</dbReference>
<dbReference type="RNAct" id="Q68EF8">
    <property type="molecule type" value="protein"/>
</dbReference>
<dbReference type="Bgee" id="ENSMUSG00000038020">
    <property type="expression patterns" value="Expressed in dentate gyrus of hippocampal formation granule cell and 83 other cell types or tissues"/>
</dbReference>
<dbReference type="GO" id="GO:0005085">
    <property type="term" value="F:guanyl-nucleotide exchange factor activity"/>
    <property type="evidence" value="ECO:0007669"/>
    <property type="project" value="UniProtKB-KW"/>
</dbReference>
<dbReference type="GO" id="GO:0007264">
    <property type="term" value="P:small GTPase-mediated signal transduction"/>
    <property type="evidence" value="ECO:0007669"/>
    <property type="project" value="InterPro"/>
</dbReference>
<dbReference type="CDD" id="cd00155">
    <property type="entry name" value="RasGEF"/>
    <property type="match status" value="1"/>
</dbReference>
<dbReference type="FunFam" id="1.10.840.10:FF:000002">
    <property type="entry name" value="Rap guanine nucleotide exchange factor 4"/>
    <property type="match status" value="1"/>
</dbReference>
<dbReference type="FunFam" id="3.10.20.90:FF:000038">
    <property type="entry name" value="Rap guanine nucleotide exchange factor 4"/>
    <property type="match status" value="1"/>
</dbReference>
<dbReference type="FunFam" id="1.20.870.10:FF:000012">
    <property type="entry name" value="Rap guanine nucleotide exchange factor like 1"/>
    <property type="match status" value="1"/>
</dbReference>
<dbReference type="Gene3D" id="3.10.20.90">
    <property type="entry name" value="Phosphatidylinositol 3-kinase Catalytic Subunit, Chain A, domain 1"/>
    <property type="match status" value="1"/>
</dbReference>
<dbReference type="Gene3D" id="1.10.840.10">
    <property type="entry name" value="Ras guanine-nucleotide exchange factors catalytic domain"/>
    <property type="match status" value="1"/>
</dbReference>
<dbReference type="Gene3D" id="1.20.870.10">
    <property type="entry name" value="Son of sevenless (SoS) protein Chain: S domain 1"/>
    <property type="match status" value="1"/>
</dbReference>
<dbReference type="InterPro" id="IPR008937">
    <property type="entry name" value="Ras-like_GEF"/>
</dbReference>
<dbReference type="InterPro" id="IPR023578">
    <property type="entry name" value="Ras_GEF_dom_sf"/>
</dbReference>
<dbReference type="InterPro" id="IPR001895">
    <property type="entry name" value="RASGEF_cat_dom"/>
</dbReference>
<dbReference type="InterPro" id="IPR036964">
    <property type="entry name" value="RASGEF_cat_dom_sf"/>
</dbReference>
<dbReference type="InterPro" id="IPR029071">
    <property type="entry name" value="Ubiquitin-like_domsf"/>
</dbReference>
<dbReference type="PANTHER" id="PTHR23113">
    <property type="entry name" value="GUANINE NUCLEOTIDE EXCHANGE FACTOR"/>
    <property type="match status" value="1"/>
</dbReference>
<dbReference type="PANTHER" id="PTHR23113:SF230">
    <property type="entry name" value="RAP GUANINE NUCLEOTIDE EXCHANGE FACTOR-LIKE 1"/>
    <property type="match status" value="1"/>
</dbReference>
<dbReference type="Pfam" id="PF00617">
    <property type="entry name" value="RasGEF"/>
    <property type="match status" value="1"/>
</dbReference>
<dbReference type="SMART" id="SM00147">
    <property type="entry name" value="RasGEF"/>
    <property type="match status" value="1"/>
</dbReference>
<dbReference type="SUPFAM" id="SSF48366">
    <property type="entry name" value="Ras GEF"/>
    <property type="match status" value="1"/>
</dbReference>
<dbReference type="SUPFAM" id="SSF54236">
    <property type="entry name" value="Ubiquitin-like"/>
    <property type="match status" value="1"/>
</dbReference>
<dbReference type="PROSITE" id="PS50009">
    <property type="entry name" value="RASGEF_CAT"/>
    <property type="match status" value="1"/>
</dbReference>
<proteinExistence type="evidence at protein level"/>
<accession>Q68EF8</accession>
<accession>A1L3T1</accession>
<comment type="function">
    <text>Probable guanine nucleotide exchange factor (GEF).</text>
</comment>
<comment type="sequence caution" evidence="3">
    <conflict type="miscellaneous discrepancy">
        <sequence resource="EMBL-CDS" id="AAI30267"/>
    </conflict>
    <text>Aberrant splicing.</text>
</comment>
<keyword id="KW-0344">Guanine-nucleotide releasing factor</keyword>
<keyword id="KW-1185">Reference proteome</keyword>
<evidence type="ECO:0000255" key="1">
    <source>
        <dbReference type="PROSITE-ProRule" id="PRU00168"/>
    </source>
</evidence>
<evidence type="ECO:0000256" key="2">
    <source>
        <dbReference type="SAM" id="MobiDB-lite"/>
    </source>
</evidence>
<evidence type="ECO:0000305" key="3"/>